<protein>
    <recommendedName>
        <fullName evidence="1">Neuraminidase</fullName>
        <ecNumber evidence="1">3.2.1.18</ecNumber>
    </recommendedName>
</protein>
<accession>Q2VC95</accession>
<evidence type="ECO:0000255" key="1">
    <source>
        <dbReference type="HAMAP-Rule" id="MF_04071"/>
    </source>
</evidence>
<dbReference type="EC" id="3.2.1.18" evidence="1"/>
<dbReference type="EMBL" id="DQ266095">
    <property type="protein sequence ID" value="ABB90268.1"/>
    <property type="molecule type" value="Genomic_RNA"/>
</dbReference>
<dbReference type="SMR" id="Q2VC95"/>
<dbReference type="GlyCosmos" id="Q2VC95">
    <property type="glycosylation" value="11 sites, No reported glycans"/>
</dbReference>
<dbReference type="PRO" id="PR:Q2VC95"/>
<dbReference type="Proteomes" id="UP000008576">
    <property type="component" value="Genome"/>
</dbReference>
<dbReference type="GO" id="GO:0020002">
    <property type="term" value="C:host cell plasma membrane"/>
    <property type="evidence" value="ECO:0007669"/>
    <property type="project" value="UniProtKB-SubCell"/>
</dbReference>
<dbReference type="GO" id="GO:0016020">
    <property type="term" value="C:membrane"/>
    <property type="evidence" value="ECO:0007669"/>
    <property type="project" value="UniProtKB-UniRule"/>
</dbReference>
<dbReference type="GO" id="GO:0055036">
    <property type="term" value="C:virion membrane"/>
    <property type="evidence" value="ECO:0007669"/>
    <property type="project" value="UniProtKB-SubCell"/>
</dbReference>
<dbReference type="GO" id="GO:0004308">
    <property type="term" value="F:exo-alpha-sialidase activity"/>
    <property type="evidence" value="ECO:0007669"/>
    <property type="project" value="UniProtKB-UniRule"/>
</dbReference>
<dbReference type="GO" id="GO:0046872">
    <property type="term" value="F:metal ion binding"/>
    <property type="evidence" value="ECO:0007669"/>
    <property type="project" value="UniProtKB-UniRule"/>
</dbReference>
<dbReference type="GO" id="GO:0005975">
    <property type="term" value="P:carbohydrate metabolic process"/>
    <property type="evidence" value="ECO:0007669"/>
    <property type="project" value="InterPro"/>
</dbReference>
<dbReference type="GO" id="GO:0046761">
    <property type="term" value="P:viral budding from plasma membrane"/>
    <property type="evidence" value="ECO:0007669"/>
    <property type="project" value="UniProtKB-UniRule"/>
</dbReference>
<dbReference type="Gene3D" id="2.120.10.10">
    <property type="match status" value="1"/>
</dbReference>
<dbReference type="HAMAP" id="MF_04071">
    <property type="entry name" value="INFV_NRAM"/>
    <property type="match status" value="1"/>
</dbReference>
<dbReference type="InterPro" id="IPR001860">
    <property type="entry name" value="Glyco_hydro_34"/>
</dbReference>
<dbReference type="InterPro" id="IPR036278">
    <property type="entry name" value="Sialidase_sf"/>
</dbReference>
<dbReference type="Pfam" id="PF00064">
    <property type="entry name" value="Neur"/>
    <property type="match status" value="1"/>
</dbReference>
<dbReference type="SUPFAM" id="SSF50939">
    <property type="entry name" value="Sialidases"/>
    <property type="match status" value="1"/>
</dbReference>
<proteinExistence type="inferred from homology"/>
<organismHost>
    <name type="scientific">Aves</name>
    <dbReference type="NCBI Taxonomy" id="8782"/>
</organismHost>
<organismHost>
    <name type="scientific">Equus caballus</name>
    <name type="common">Horse</name>
    <dbReference type="NCBI Taxonomy" id="9796"/>
</organismHost>
<organismHost>
    <name type="scientific">Homo sapiens</name>
    <name type="common">Human</name>
    <dbReference type="NCBI Taxonomy" id="9606"/>
</organismHost>
<organismHost>
    <name type="scientific">Phocidae</name>
    <name type="common">true seals</name>
    <dbReference type="NCBI Taxonomy" id="9709"/>
</organismHost>
<gene>
    <name evidence="1" type="primary">NA</name>
</gene>
<comment type="function">
    <text evidence="1">Catalyzes the removal of terminal sialic acid residues from viral and cellular glycoconjugates. Cleaves off the terminal sialic acids on the glycosylated HA during virus budding to facilitate virus release. Additionally helps virus spread through the circulation by further removing sialic acids from the cell surface. These cleavages prevent self-aggregation and ensure the efficient spread of the progeny virus from cell to cell. Otherwise, infection would be limited to one round of replication. Described as a receptor-destroying enzyme because it cleaves a terminal sialic acid from the cellular receptors. May facilitate viral invasion of the upper airways by cleaving the sialic acid moieties on the mucin of the airway epithelial cells. Likely to plays a role in the budding process through its association with lipid rafts during intracellular transport. May additionally display a raft-association independent effect on budding. Plays a role in the determination of host range restriction on replication and virulence. Sialidase activity in late endosome/lysosome traffic seems to enhance virus replication.</text>
</comment>
<comment type="catalytic activity">
    <reaction evidence="1">
        <text>Hydrolysis of alpha-(2-&gt;3)-, alpha-(2-&gt;6)-, alpha-(2-&gt;8)- glycosidic linkages of terminal sialic acid residues in oligosaccharides, glycoproteins, glycolipids, colominic acid and synthetic substrates.</text>
        <dbReference type="EC" id="3.2.1.18"/>
    </reaction>
</comment>
<comment type="cofactor">
    <cofactor evidence="1">
        <name>Ca(2+)</name>
        <dbReference type="ChEBI" id="CHEBI:29108"/>
    </cofactor>
</comment>
<comment type="activity regulation">
    <text evidence="1">Inhibited by the neuraminidase inhibitors zanamivir (Relenza) and oseltamivir (Tamiflu). These drugs interfere with the release of progeny virus from infected cells and are effective against all influenza strains. Resistance to neuraminidase inhibitors is quite rare.</text>
</comment>
<comment type="subunit">
    <text evidence="1">Homotetramer.</text>
</comment>
<comment type="subcellular location">
    <subcellularLocation>
        <location evidence="1">Virion membrane</location>
    </subcellularLocation>
    <subcellularLocation>
        <location evidence="1">Host apical cell membrane</location>
        <topology evidence="1">Single-pass type II membrane protein</topology>
    </subcellularLocation>
    <text evidence="1">Preferentially accumulates at the apical plasma membrane in infected polarized epithelial cells, which is the virus assembly site. Uses lipid rafts for cell surface transport and apical sorting. In the virion, forms a mushroom-shaped spike on the surface of the membrane.</text>
</comment>
<comment type="domain">
    <text evidence="1">Intact N-terminus is essential for virion morphogenesis. Possesses two apical sorting signals, one in the ectodomain, which is likely to be a glycan, and the other in the transmembrane domain. The transmembrane domain also plays a role in lipid raft association.</text>
</comment>
<comment type="PTM">
    <text evidence="1">N-glycosylated.</text>
</comment>
<comment type="miscellaneous">
    <text>The influenza A genome consist of 8 RNA segments. Genetic variation of hemagglutinin and/or neuraminidase genes results in the emergence of new influenza strains. The mechanism of variation can be the result of point mutations or the result of genetic reassortment between segments of two different strains.</text>
</comment>
<comment type="miscellaneous">
    <text>SC35 was derived from A/Seal/Massachussetts/1/80 (H7N7) by serial passages in chicken embryo cells, thereby acquiring a multibasic cleavage site in its hemagglutinin (HA) and becoming 100% lethal for chickens. SC35 was then passaged 11 times in mouse lung, yielding the mouse-adapted variant SC35M.</text>
</comment>
<comment type="similarity">
    <text evidence="1">Belongs to the glycosyl hydrolase 34 family.</text>
</comment>
<organism>
    <name type="scientific">Influenza A virus (strain A/Seal/Massachusetts/1/1980 H7N7)</name>
    <dbReference type="NCBI Taxonomy" id="384493"/>
    <lineage>
        <taxon>Viruses</taxon>
        <taxon>Riboviria</taxon>
        <taxon>Orthornavirae</taxon>
        <taxon>Negarnaviricota</taxon>
        <taxon>Polyploviricotina</taxon>
        <taxon>Insthoviricetes</taxon>
        <taxon>Articulavirales</taxon>
        <taxon>Orthomyxoviridae</taxon>
        <taxon>Alphainfluenzavirus</taxon>
        <taxon>Alphainfluenzavirus influenzae</taxon>
        <taxon>Influenza A virus</taxon>
    </lineage>
</organism>
<sequence>MNPNQKLFALSGVAIALSIFNLLIGISNVVLNVSLHLKNNNDQDKNWTCTSITQNNTTLIENTYVNNTTVINKETEAAKQNYLMLNKSLCKVEGWVVVAKDNAIRFGESEQVIVTREPYVSCDPLGCRMYALHQGTTIRNKHSNGTIHDRTALRGLISTPLGSPPVVSNSDFLCVGWSSTSCHDGIGRMTICVQGNNDNATATVYYDRRLTTTIKTWARNILRTQESECVCHNGTCVVVMTDGSASSQAHTKVLYFHKGLIIKEEALKGSARHIEECSCYGHDSKVTCVCRDNWQGANRPVIEIDMNAMEHTSQYLCTGVLTDTSRPSDKSIGDCNNPITGSPGAPGVKGFGFLDSSNTWLGRTISPRSRSGFEMLKIPNAGTDPNSRITERQEIVDSNNWSGYSGSFIDYWDESSECYNPCFYVELIRGRPEEAKYVWWTSNSLVALCGSPVPVGSGSFPDGAQIQYFS</sequence>
<keyword id="KW-0106">Calcium</keyword>
<keyword id="KW-1015">Disulfide bond</keyword>
<keyword id="KW-0325">Glycoprotein</keyword>
<keyword id="KW-0326">Glycosidase</keyword>
<keyword id="KW-1032">Host cell membrane</keyword>
<keyword id="KW-1043">Host membrane</keyword>
<keyword id="KW-0378">Hydrolase</keyword>
<keyword id="KW-0472">Membrane</keyword>
<keyword id="KW-0479">Metal-binding</keyword>
<keyword id="KW-0735">Signal-anchor</keyword>
<keyword id="KW-0812">Transmembrane</keyword>
<keyword id="KW-1133">Transmembrane helix</keyword>
<keyword id="KW-0946">Virion</keyword>
<name>NRAM_I80A2</name>
<feature type="chain" id="PRO_0000280149" description="Neuraminidase">
    <location>
        <begin position="1"/>
        <end position="470"/>
    </location>
</feature>
<feature type="topological domain" description="Intravirion" evidence="1">
    <location>
        <begin position="1"/>
        <end position="6"/>
    </location>
</feature>
<feature type="transmembrane region" description="Helical" evidence="1">
    <location>
        <begin position="7"/>
        <end position="27"/>
    </location>
</feature>
<feature type="topological domain" description="Virion surface" evidence="1">
    <location>
        <begin position="28"/>
        <end position="470"/>
    </location>
</feature>
<feature type="region of interest" description="Involved in apical transport and lipid raft association" evidence="1">
    <location>
        <begin position="11"/>
        <end position="33"/>
    </location>
</feature>
<feature type="region of interest" description="Hypervariable stalk region" evidence="1">
    <location>
        <begin position="36"/>
        <end position="86"/>
    </location>
</feature>
<feature type="region of interest" description="Head of neuraminidase" evidence="1">
    <location>
        <begin position="89"/>
        <end position="470"/>
    </location>
</feature>
<feature type="active site" description="Proton donor/acceptor" evidence="1">
    <location>
        <position position="149"/>
    </location>
</feature>
<feature type="active site" description="Nucleophile" evidence="1">
    <location>
        <position position="404"/>
    </location>
</feature>
<feature type="binding site" evidence="1">
    <location>
        <position position="116"/>
    </location>
    <ligand>
        <name>substrate</name>
    </ligand>
</feature>
<feature type="binding site" evidence="1">
    <location>
        <position position="150"/>
    </location>
    <ligand>
        <name>substrate</name>
    </ligand>
</feature>
<feature type="binding site" evidence="1">
    <location>
        <begin position="275"/>
        <end position="276"/>
    </location>
    <ligand>
        <name>substrate</name>
    </ligand>
</feature>
<feature type="binding site" evidence="1">
    <location>
        <position position="291"/>
    </location>
    <ligand>
        <name>substrate</name>
    </ligand>
</feature>
<feature type="binding site" evidence="1">
    <location>
        <position position="292"/>
    </location>
    <ligand>
        <name>Ca(2+)</name>
        <dbReference type="ChEBI" id="CHEBI:29108"/>
    </ligand>
</feature>
<feature type="binding site" evidence="1">
    <location>
        <position position="296"/>
    </location>
    <ligand>
        <name>Ca(2+)</name>
        <dbReference type="ChEBI" id="CHEBI:29108"/>
    </ligand>
</feature>
<feature type="binding site" evidence="1">
    <location>
        <position position="323"/>
    </location>
    <ligand>
        <name>Ca(2+)</name>
        <dbReference type="ChEBI" id="CHEBI:29108"/>
    </ligand>
</feature>
<feature type="binding site" evidence="1">
    <location>
        <position position="370"/>
    </location>
    <ligand>
        <name>substrate</name>
    </ligand>
</feature>
<feature type="glycosylation site" description="N-linked (GlcNAc...) asparagine; by host" evidence="1">
    <location>
        <position position="32"/>
    </location>
</feature>
<feature type="glycosylation site" description="N-linked (GlcNAc...) asparagine; by host" evidence="1">
    <location>
        <position position="46"/>
    </location>
</feature>
<feature type="glycosylation site" description="N-linked (GlcNAc...) asparagine; by host" evidence="1">
    <location>
        <position position="55"/>
    </location>
</feature>
<feature type="glycosylation site" description="N-linked (GlcNAc...) asparagine; by host" evidence="1">
    <location>
        <position position="56"/>
    </location>
</feature>
<feature type="glycosylation site" description="N-linked (GlcNAc...) asparagine; by host" evidence="1">
    <location>
        <position position="66"/>
    </location>
</feature>
<feature type="glycosylation site" description="N-linked (GlcNAc...) asparagine; by host" evidence="1">
    <location>
        <position position="67"/>
    </location>
</feature>
<feature type="glycosylation site" description="N-linked (GlcNAc...) asparagine; by host" evidence="1">
    <location>
        <position position="86"/>
    </location>
</feature>
<feature type="glycosylation site" description="N-linked (GlcNAc...) asparagine; by host" evidence="1">
    <location>
        <position position="144"/>
    </location>
</feature>
<feature type="glycosylation site" description="N-linked (GlcNAc...) asparagine; by host" evidence="1">
    <location>
        <position position="199"/>
    </location>
</feature>
<feature type="glycosylation site" description="N-linked (GlcNAc...) asparagine; by host" evidence="1">
    <location>
        <position position="233"/>
    </location>
</feature>
<feature type="glycosylation site" description="N-linked (GlcNAc...) asparagine; by host" evidence="1">
    <location>
        <position position="400"/>
    </location>
</feature>
<feature type="disulfide bond" evidence="1">
    <location>
        <begin position="90"/>
        <end position="418"/>
    </location>
</feature>
<feature type="disulfide bond" evidence="1">
    <location>
        <begin position="122"/>
        <end position="127"/>
    </location>
</feature>
<feature type="disulfide bond" evidence="1">
    <location>
        <begin position="182"/>
        <end position="229"/>
    </location>
</feature>
<feature type="disulfide bond" evidence="1">
    <location>
        <begin position="231"/>
        <end position="236"/>
    </location>
</feature>
<feature type="disulfide bond" evidence="1">
    <location>
        <begin position="277"/>
        <end position="290"/>
    </location>
</feature>
<feature type="disulfide bond" evidence="1">
    <location>
        <begin position="279"/>
        <end position="288"/>
    </location>
</feature>
<feature type="disulfide bond" evidence="1">
    <location>
        <begin position="317"/>
        <end position="335"/>
    </location>
</feature>
<feature type="disulfide bond" evidence="1">
    <location>
        <begin position="422"/>
        <end position="449"/>
    </location>
</feature>
<reference key="1">
    <citation type="journal article" date="2005" name="Proc. Natl. Acad. Sci. U.S.A.">
        <title>The viral polymerase mediates adaptation of an avian influenza virus to a mammalian host.</title>
        <authorList>
            <person name="Gabriel G."/>
            <person name="Dauber B."/>
            <person name="Wolff T."/>
            <person name="Planz O."/>
            <person name="Klenk H.D."/>
            <person name="Stech J."/>
        </authorList>
    </citation>
    <scope>NUCLEOTIDE SEQUENCE [GENOMIC RNA]</scope>
    <source>
        <strain>SC35M mouse-adapted</strain>
    </source>
</reference>
<reference key="2">
    <citation type="journal article" date="2004" name="Virus Res.">
        <title>Assembly and budding of influenza virus.</title>
        <authorList>
            <person name="Nayak D.P."/>
            <person name="Hui E.K."/>
            <person name="Barman S."/>
        </authorList>
    </citation>
    <scope>REVIEW</scope>
</reference>
<reference key="3">
    <citation type="journal article" date="2005" name="N. Engl. J. Med.">
        <title>Neuraminidase inhibitors for influenza.</title>
        <authorList>
            <person name="Moscona A."/>
        </authorList>
    </citation>
    <scope>REVIEW</scope>
</reference>
<reference key="4">
    <citation type="journal article" date="2005" name="Biol. Pharm. Bull.">
        <title>Sialobiology of influenza: molecular mechanism of host range variation of influenza viruses.</title>
        <authorList>
            <person name="Suzuki Y."/>
        </authorList>
    </citation>
    <scope>REVIEW</scope>
</reference>